<reference key="1">
    <citation type="journal article" date="2003" name="DNA Seq.">
        <title>Isolation of the carbon catabolite repressor (CREA) gene from the plant-pathogenic fungus Cochliobolus carbonum.</title>
        <authorList>
            <person name="Tonukari N.J."/>
            <person name="Scott-Craig J.S."/>
            <person name="Walton J.D."/>
        </authorList>
    </citation>
    <scope>NUCLEOTIDE SEQUENCE [MRNA]</scope>
</reference>
<keyword id="KW-0238">DNA-binding</keyword>
<keyword id="KW-0479">Metal-binding</keyword>
<keyword id="KW-0539">Nucleus</keyword>
<keyword id="KW-0677">Repeat</keyword>
<keyword id="KW-0678">Repressor</keyword>
<keyword id="KW-0804">Transcription</keyword>
<keyword id="KW-0805">Transcription regulation</keyword>
<keyword id="KW-0862">Zinc</keyword>
<keyword id="KW-0863">Zinc-finger</keyword>
<accession>Q9HFS2</accession>
<proteinExistence type="evidence at transcript level"/>
<organism>
    <name type="scientific">Cochliobolus carbonum</name>
    <name type="common">Maize leaf spot fungus</name>
    <name type="synonym">Bipolaris zeicola</name>
    <dbReference type="NCBI Taxonomy" id="5017"/>
    <lineage>
        <taxon>Eukaryota</taxon>
        <taxon>Fungi</taxon>
        <taxon>Dikarya</taxon>
        <taxon>Ascomycota</taxon>
        <taxon>Pezizomycotina</taxon>
        <taxon>Dothideomycetes</taxon>
        <taxon>Pleosporomycetidae</taxon>
        <taxon>Pleosporales</taxon>
        <taxon>Pleosporineae</taxon>
        <taxon>Pleosporaceae</taxon>
        <taxon>Bipolaris</taxon>
    </lineage>
</organism>
<evidence type="ECO:0000250" key="1"/>
<evidence type="ECO:0000255" key="2">
    <source>
        <dbReference type="PROSITE-ProRule" id="PRU00042"/>
    </source>
</evidence>
<evidence type="ECO:0000256" key="3">
    <source>
        <dbReference type="SAM" id="MobiDB-lite"/>
    </source>
</evidence>
<evidence type="ECO:0000305" key="4"/>
<comment type="function">
    <text evidence="1">Involved in carbon catabolite repression. Represses the transcription of a number of genes by binding to a GC-rich region in their promoter (By similarity).</text>
</comment>
<comment type="subcellular location">
    <subcellularLocation>
        <location>Nucleus</location>
    </subcellularLocation>
</comment>
<comment type="similarity">
    <text evidence="4">Belongs to the creA/MIG C2H2-type zinc-finger protein family.</text>
</comment>
<gene>
    <name type="primary">CREA</name>
</gene>
<protein>
    <recommendedName>
        <fullName>DNA-binding protein creA</fullName>
    </recommendedName>
    <alternativeName>
        <fullName>Carbon catabolite repressor</fullName>
    </alternativeName>
</protein>
<name>CREA_COCCA</name>
<dbReference type="EMBL" id="AF306571">
    <property type="protein sequence ID" value="AAG29826.1"/>
    <property type="molecule type" value="mRNA"/>
</dbReference>
<dbReference type="SMR" id="Q9HFS2"/>
<dbReference type="GO" id="GO:0005737">
    <property type="term" value="C:cytoplasm"/>
    <property type="evidence" value="ECO:0007669"/>
    <property type="project" value="TreeGrafter"/>
</dbReference>
<dbReference type="GO" id="GO:0005634">
    <property type="term" value="C:nucleus"/>
    <property type="evidence" value="ECO:0007669"/>
    <property type="project" value="UniProtKB-SubCell"/>
</dbReference>
<dbReference type="GO" id="GO:0000978">
    <property type="term" value="F:RNA polymerase II cis-regulatory region sequence-specific DNA binding"/>
    <property type="evidence" value="ECO:0007669"/>
    <property type="project" value="TreeGrafter"/>
</dbReference>
<dbReference type="GO" id="GO:0008270">
    <property type="term" value="F:zinc ion binding"/>
    <property type="evidence" value="ECO:0007669"/>
    <property type="project" value="UniProtKB-KW"/>
</dbReference>
<dbReference type="GO" id="GO:0000433">
    <property type="term" value="P:carbon catabolite repression of transcription from RNA polymerase II promoter by glucose"/>
    <property type="evidence" value="ECO:0007669"/>
    <property type="project" value="TreeGrafter"/>
</dbReference>
<dbReference type="FunFam" id="3.30.160.60:FF:000089">
    <property type="entry name" value="DNA-binding protein creA"/>
    <property type="match status" value="1"/>
</dbReference>
<dbReference type="FunFam" id="3.30.160.60:FF:000152">
    <property type="entry name" value="DNA-binding protein creA"/>
    <property type="match status" value="1"/>
</dbReference>
<dbReference type="Gene3D" id="3.30.160.60">
    <property type="entry name" value="Classic Zinc Finger"/>
    <property type="match status" value="2"/>
</dbReference>
<dbReference type="InterPro" id="IPR051007">
    <property type="entry name" value="creA/MIG_C2H2-ZnF"/>
</dbReference>
<dbReference type="InterPro" id="IPR036236">
    <property type="entry name" value="Znf_C2H2_sf"/>
</dbReference>
<dbReference type="InterPro" id="IPR013087">
    <property type="entry name" value="Znf_C2H2_type"/>
</dbReference>
<dbReference type="PANTHER" id="PTHR47428">
    <property type="entry name" value="REGULATORY PROTEIN MIG1-RELATED"/>
    <property type="match status" value="1"/>
</dbReference>
<dbReference type="PANTHER" id="PTHR47428:SF1">
    <property type="entry name" value="REGULATORY PROTEIN MIG1-RELATED"/>
    <property type="match status" value="1"/>
</dbReference>
<dbReference type="Pfam" id="PF00096">
    <property type="entry name" value="zf-C2H2"/>
    <property type="match status" value="2"/>
</dbReference>
<dbReference type="SMART" id="SM00355">
    <property type="entry name" value="ZnF_C2H2"/>
    <property type="match status" value="2"/>
</dbReference>
<dbReference type="SUPFAM" id="SSF57667">
    <property type="entry name" value="beta-beta-alpha zinc fingers"/>
    <property type="match status" value="1"/>
</dbReference>
<dbReference type="PROSITE" id="PS00028">
    <property type="entry name" value="ZINC_FINGER_C2H2_1"/>
    <property type="match status" value="2"/>
</dbReference>
<dbReference type="PROSITE" id="PS50157">
    <property type="entry name" value="ZINC_FINGER_C2H2_2"/>
    <property type="match status" value="2"/>
</dbReference>
<sequence>MQSNSASTGFANLLNPETASQNQQQQQQQPTSTPTASMAAATVSLMAPLLQNAPQQTEEPRQDLPRPYKCPLCDKAFHRLEHQTRHIRTHTGEKPHACTFPGCTKRFSRSDELTRHSRIHNNPNSRRGKGQQHAAATQAAVAAVQAGLMEPGSNLAHMMPPPSKPISRSAPGSQLGSPNVSPPHSFSNYSPGMSNDLAAYHQGGLSNSSSPSGLARPMDLLADAASRLEQRPGHISHSSRHHLTSGYHPYANRLPGLSQYAYSSQPMSRSHSHEDDDPYSHRMTKKSRPGSPSSTAPPSPTFSHDSCSPTPDHTPLATPAHSPRLRPHGFSDLQLPHLRHLSLNQNFVPALAPMEPSTEREQPYVPSQSSGLRIGDIISKPEGAQRKLPVPQVPKVAVQDLLNGPSNSGFSSGNNSATASLAGEDLSNRN</sequence>
<feature type="chain" id="PRO_0000046874" description="DNA-binding protein creA">
    <location>
        <begin position="1"/>
        <end position="430"/>
    </location>
</feature>
<feature type="zinc finger region" description="C2H2-type 1" evidence="2">
    <location>
        <begin position="68"/>
        <end position="90"/>
    </location>
</feature>
<feature type="zinc finger region" description="C2H2-type 2" evidence="2">
    <location>
        <begin position="96"/>
        <end position="120"/>
    </location>
</feature>
<feature type="region of interest" description="Disordered" evidence="3">
    <location>
        <begin position="1"/>
        <end position="67"/>
    </location>
</feature>
<feature type="region of interest" description="Disordered" evidence="3">
    <location>
        <begin position="109"/>
        <end position="140"/>
    </location>
</feature>
<feature type="region of interest" description="Disordered" evidence="3">
    <location>
        <begin position="152"/>
        <end position="190"/>
    </location>
</feature>
<feature type="region of interest" description="Disordered" evidence="3">
    <location>
        <begin position="231"/>
        <end position="250"/>
    </location>
</feature>
<feature type="region of interest" description="Disordered" evidence="3">
    <location>
        <begin position="262"/>
        <end position="331"/>
    </location>
</feature>
<feature type="region of interest" description="Disordered" evidence="3">
    <location>
        <begin position="353"/>
        <end position="430"/>
    </location>
</feature>
<feature type="compositionally biased region" description="Polar residues" evidence="3">
    <location>
        <begin position="1"/>
        <end position="20"/>
    </location>
</feature>
<feature type="compositionally biased region" description="Low complexity" evidence="3">
    <location>
        <begin position="21"/>
        <end position="42"/>
    </location>
</feature>
<feature type="compositionally biased region" description="Low complexity" evidence="3">
    <location>
        <begin position="131"/>
        <end position="140"/>
    </location>
</feature>
<feature type="compositionally biased region" description="Polar residues" evidence="3">
    <location>
        <begin position="170"/>
        <end position="190"/>
    </location>
</feature>
<feature type="compositionally biased region" description="Basic and acidic residues" evidence="3">
    <location>
        <begin position="271"/>
        <end position="280"/>
    </location>
</feature>
<feature type="compositionally biased region" description="Polar residues" evidence="3">
    <location>
        <begin position="301"/>
        <end position="311"/>
    </location>
</feature>
<feature type="compositionally biased region" description="Low complexity" evidence="3">
    <location>
        <begin position="403"/>
        <end position="416"/>
    </location>
</feature>